<organism>
    <name type="scientific">Nocardia farcinica (strain IFM 10152)</name>
    <dbReference type="NCBI Taxonomy" id="247156"/>
    <lineage>
        <taxon>Bacteria</taxon>
        <taxon>Bacillati</taxon>
        <taxon>Actinomycetota</taxon>
        <taxon>Actinomycetes</taxon>
        <taxon>Mycobacteriales</taxon>
        <taxon>Nocardiaceae</taxon>
        <taxon>Nocardia</taxon>
    </lineage>
</organism>
<sequence>MASLREQIITELGVQPVIEPKTEVRRRVDFLKDYLRSTPAQGFVLGISGGQDSTLTGRLCQLAAEEVRAEGGEATFVAVRLPYGVQADEHDAAVAMEFIGPDRAVTVNVKPGVDATAGAVAEGLGLDALRDFVRGNIKARERMIIQYAIAGQENLLVVGTDHAAEAVTGFFTKYGDGGVDLTPLTGLTKRQGAALLQELGAPPSTWSKVPTADLEDDRPALPDEEALGLRYSEIDDYLEGKEVTEAVAARVEQLYTATRHKRTVPVSPLDSWWR</sequence>
<proteinExistence type="inferred from homology"/>
<keyword id="KW-0067">ATP-binding</keyword>
<keyword id="KW-0436">Ligase</keyword>
<keyword id="KW-0460">Magnesium</keyword>
<keyword id="KW-0479">Metal-binding</keyword>
<keyword id="KW-0520">NAD</keyword>
<keyword id="KW-0547">Nucleotide-binding</keyword>
<keyword id="KW-1185">Reference proteome</keyword>
<gene>
    <name evidence="1" type="primary">nadE</name>
    <name type="ordered locus">NFA_43120</name>
</gene>
<feature type="chain" id="PRO_1000077576" description="NH(3)-dependent NAD(+) synthetase">
    <location>
        <begin position="1"/>
        <end position="274"/>
    </location>
</feature>
<feature type="binding site" evidence="1">
    <location>
        <begin position="46"/>
        <end position="53"/>
    </location>
    <ligand>
        <name>ATP</name>
        <dbReference type="ChEBI" id="CHEBI:30616"/>
    </ligand>
</feature>
<feature type="binding site" evidence="1">
    <location>
        <position position="52"/>
    </location>
    <ligand>
        <name>Mg(2+)</name>
        <dbReference type="ChEBI" id="CHEBI:18420"/>
    </ligand>
</feature>
<feature type="binding site" evidence="1">
    <location>
        <position position="140"/>
    </location>
    <ligand>
        <name>deamido-NAD(+)</name>
        <dbReference type="ChEBI" id="CHEBI:58437"/>
    </ligand>
</feature>
<feature type="binding site" evidence="1">
    <location>
        <position position="160"/>
    </location>
    <ligand>
        <name>ATP</name>
        <dbReference type="ChEBI" id="CHEBI:30616"/>
    </ligand>
</feature>
<feature type="binding site" evidence="1">
    <location>
        <position position="165"/>
    </location>
    <ligand>
        <name>Mg(2+)</name>
        <dbReference type="ChEBI" id="CHEBI:18420"/>
    </ligand>
</feature>
<feature type="binding site" evidence="1">
    <location>
        <position position="173"/>
    </location>
    <ligand>
        <name>deamido-NAD(+)</name>
        <dbReference type="ChEBI" id="CHEBI:58437"/>
    </ligand>
</feature>
<feature type="binding site" evidence="1">
    <location>
        <position position="180"/>
    </location>
    <ligand>
        <name>deamido-NAD(+)</name>
        <dbReference type="ChEBI" id="CHEBI:58437"/>
    </ligand>
</feature>
<feature type="binding site" evidence="1">
    <location>
        <position position="189"/>
    </location>
    <ligand>
        <name>ATP</name>
        <dbReference type="ChEBI" id="CHEBI:30616"/>
    </ligand>
</feature>
<feature type="binding site" evidence="1">
    <location>
        <position position="211"/>
    </location>
    <ligand>
        <name>ATP</name>
        <dbReference type="ChEBI" id="CHEBI:30616"/>
    </ligand>
</feature>
<feature type="binding site" evidence="1">
    <location>
        <begin position="260"/>
        <end position="261"/>
    </location>
    <ligand>
        <name>deamido-NAD(+)</name>
        <dbReference type="ChEBI" id="CHEBI:58437"/>
    </ligand>
</feature>
<accession>Q5YRN0</accession>
<protein>
    <recommendedName>
        <fullName evidence="1">NH(3)-dependent NAD(+) synthetase</fullName>
        <ecNumber evidence="1">6.3.1.5</ecNumber>
    </recommendedName>
</protein>
<evidence type="ECO:0000255" key="1">
    <source>
        <dbReference type="HAMAP-Rule" id="MF_00193"/>
    </source>
</evidence>
<name>NADE_NOCFA</name>
<reference key="1">
    <citation type="journal article" date="2004" name="Proc. Natl. Acad. Sci. U.S.A.">
        <title>The complete genomic sequence of Nocardia farcinica IFM 10152.</title>
        <authorList>
            <person name="Ishikawa J."/>
            <person name="Yamashita A."/>
            <person name="Mikami Y."/>
            <person name="Hoshino Y."/>
            <person name="Kurita H."/>
            <person name="Hotta K."/>
            <person name="Shiba T."/>
            <person name="Hattori M."/>
        </authorList>
    </citation>
    <scope>NUCLEOTIDE SEQUENCE [LARGE SCALE GENOMIC DNA]</scope>
    <source>
        <strain>IFM 10152</strain>
    </source>
</reference>
<comment type="function">
    <text evidence="1">Catalyzes the ATP-dependent amidation of deamido-NAD to form NAD. Uses ammonia as a nitrogen source.</text>
</comment>
<comment type="catalytic activity">
    <reaction evidence="1">
        <text>deamido-NAD(+) + NH4(+) + ATP = AMP + diphosphate + NAD(+) + H(+)</text>
        <dbReference type="Rhea" id="RHEA:21188"/>
        <dbReference type="ChEBI" id="CHEBI:15378"/>
        <dbReference type="ChEBI" id="CHEBI:28938"/>
        <dbReference type="ChEBI" id="CHEBI:30616"/>
        <dbReference type="ChEBI" id="CHEBI:33019"/>
        <dbReference type="ChEBI" id="CHEBI:57540"/>
        <dbReference type="ChEBI" id="CHEBI:58437"/>
        <dbReference type="ChEBI" id="CHEBI:456215"/>
        <dbReference type="EC" id="6.3.1.5"/>
    </reaction>
</comment>
<comment type="pathway">
    <text evidence="1">Cofactor biosynthesis; NAD(+) biosynthesis; NAD(+) from deamido-NAD(+) (ammonia route): step 1/1.</text>
</comment>
<comment type="subunit">
    <text evidence="1">Homodimer.</text>
</comment>
<comment type="similarity">
    <text evidence="1">Belongs to the NAD synthetase family.</text>
</comment>
<dbReference type="EC" id="6.3.1.5" evidence="1"/>
<dbReference type="EMBL" id="AP006618">
    <property type="protein sequence ID" value="BAD59161.1"/>
    <property type="molecule type" value="Genomic_DNA"/>
</dbReference>
<dbReference type="RefSeq" id="WP_011210846.1">
    <property type="nucleotide sequence ID" value="NC_006361.1"/>
</dbReference>
<dbReference type="SMR" id="Q5YRN0"/>
<dbReference type="STRING" id="247156.NFA_43120"/>
<dbReference type="GeneID" id="61134939"/>
<dbReference type="KEGG" id="nfa:NFA_43120"/>
<dbReference type="eggNOG" id="COG0171">
    <property type="taxonomic scope" value="Bacteria"/>
</dbReference>
<dbReference type="HOGENOM" id="CLU_059327_3_0_11"/>
<dbReference type="OrthoDB" id="3266517at2"/>
<dbReference type="UniPathway" id="UPA00253">
    <property type="reaction ID" value="UER00333"/>
</dbReference>
<dbReference type="Proteomes" id="UP000006820">
    <property type="component" value="Chromosome"/>
</dbReference>
<dbReference type="GO" id="GO:0005737">
    <property type="term" value="C:cytoplasm"/>
    <property type="evidence" value="ECO:0007669"/>
    <property type="project" value="InterPro"/>
</dbReference>
<dbReference type="GO" id="GO:0005524">
    <property type="term" value="F:ATP binding"/>
    <property type="evidence" value="ECO:0007669"/>
    <property type="project" value="UniProtKB-UniRule"/>
</dbReference>
<dbReference type="GO" id="GO:0004359">
    <property type="term" value="F:glutaminase activity"/>
    <property type="evidence" value="ECO:0007669"/>
    <property type="project" value="InterPro"/>
</dbReference>
<dbReference type="GO" id="GO:0046872">
    <property type="term" value="F:metal ion binding"/>
    <property type="evidence" value="ECO:0007669"/>
    <property type="project" value="UniProtKB-KW"/>
</dbReference>
<dbReference type="GO" id="GO:0003952">
    <property type="term" value="F:NAD+ synthase (glutamine-hydrolyzing) activity"/>
    <property type="evidence" value="ECO:0007669"/>
    <property type="project" value="InterPro"/>
</dbReference>
<dbReference type="GO" id="GO:0008795">
    <property type="term" value="F:NAD+ synthase activity"/>
    <property type="evidence" value="ECO:0007669"/>
    <property type="project" value="UniProtKB-UniRule"/>
</dbReference>
<dbReference type="GO" id="GO:0009435">
    <property type="term" value="P:NAD biosynthetic process"/>
    <property type="evidence" value="ECO:0007669"/>
    <property type="project" value="UniProtKB-UniRule"/>
</dbReference>
<dbReference type="CDD" id="cd00553">
    <property type="entry name" value="NAD_synthase"/>
    <property type="match status" value="1"/>
</dbReference>
<dbReference type="FunFam" id="3.40.50.620:FF:000015">
    <property type="entry name" value="NH(3)-dependent NAD(+) synthetase"/>
    <property type="match status" value="1"/>
</dbReference>
<dbReference type="Gene3D" id="3.40.50.620">
    <property type="entry name" value="HUPs"/>
    <property type="match status" value="1"/>
</dbReference>
<dbReference type="HAMAP" id="MF_00193">
    <property type="entry name" value="NadE_ammonia_dep"/>
    <property type="match status" value="1"/>
</dbReference>
<dbReference type="InterPro" id="IPR022310">
    <property type="entry name" value="NAD/GMP_synthase"/>
</dbReference>
<dbReference type="InterPro" id="IPR003694">
    <property type="entry name" value="NAD_synthase"/>
</dbReference>
<dbReference type="InterPro" id="IPR022926">
    <property type="entry name" value="NH(3)-dep_NAD(+)_synth"/>
</dbReference>
<dbReference type="InterPro" id="IPR014729">
    <property type="entry name" value="Rossmann-like_a/b/a_fold"/>
</dbReference>
<dbReference type="NCBIfam" id="TIGR00552">
    <property type="entry name" value="nadE"/>
    <property type="match status" value="1"/>
</dbReference>
<dbReference type="NCBIfam" id="NF001979">
    <property type="entry name" value="PRK00768.1"/>
    <property type="match status" value="1"/>
</dbReference>
<dbReference type="PANTHER" id="PTHR23090">
    <property type="entry name" value="NH 3 /GLUTAMINE-DEPENDENT NAD + SYNTHETASE"/>
    <property type="match status" value="1"/>
</dbReference>
<dbReference type="PANTHER" id="PTHR23090:SF7">
    <property type="entry name" value="NH(3)-DEPENDENT NAD(+) SYNTHETASE"/>
    <property type="match status" value="1"/>
</dbReference>
<dbReference type="Pfam" id="PF02540">
    <property type="entry name" value="NAD_synthase"/>
    <property type="match status" value="1"/>
</dbReference>
<dbReference type="SUPFAM" id="SSF52402">
    <property type="entry name" value="Adenine nucleotide alpha hydrolases-like"/>
    <property type="match status" value="1"/>
</dbReference>